<comment type="function">
    <text evidence="1">Involved in the binding of tRNA to the ribosomes.</text>
</comment>
<comment type="subunit">
    <text evidence="1">Part of the 30S ribosomal subunit.</text>
</comment>
<comment type="similarity">
    <text evidence="1">Belongs to the universal ribosomal protein uS10 family.</text>
</comment>
<gene>
    <name evidence="1" type="primary">rpsJ</name>
    <name type="ordered locus">BCAH187_A0140</name>
</gene>
<name>RS10_BACC7</name>
<protein>
    <recommendedName>
        <fullName evidence="1">Small ribosomal subunit protein uS10</fullName>
    </recommendedName>
    <alternativeName>
        <fullName evidence="2">30S ribosomal protein S10</fullName>
    </alternativeName>
</protein>
<feature type="chain" id="PRO_1000127079" description="Small ribosomal subunit protein uS10">
    <location>
        <begin position="1"/>
        <end position="102"/>
    </location>
</feature>
<proteinExistence type="inferred from homology"/>
<sequence length="102" mass="11684">MAKEKIRIRLKAYDHRILDQSAEKIVETAKRSGATVSGPIPLPTEKTVYTILRAVHKYKDSREQFEMRTHKRLIDIVSPTPQTVDSLMRLDLPSGVDIEIKL</sequence>
<reference key="1">
    <citation type="submission" date="2008-10" db="EMBL/GenBank/DDBJ databases">
        <title>Genome sequence of Bacillus cereus AH187.</title>
        <authorList>
            <person name="Dodson R.J."/>
            <person name="Durkin A.S."/>
            <person name="Rosovitz M.J."/>
            <person name="Rasko D.A."/>
            <person name="Kolsto A.B."/>
            <person name="Okstad O.A."/>
            <person name="Ravel J."/>
            <person name="Sutton G."/>
        </authorList>
    </citation>
    <scope>NUCLEOTIDE SEQUENCE [LARGE SCALE GENOMIC DNA]</scope>
    <source>
        <strain>AH187</strain>
    </source>
</reference>
<keyword id="KW-0687">Ribonucleoprotein</keyword>
<keyword id="KW-0689">Ribosomal protein</keyword>
<organism>
    <name type="scientific">Bacillus cereus (strain AH187)</name>
    <dbReference type="NCBI Taxonomy" id="405534"/>
    <lineage>
        <taxon>Bacteria</taxon>
        <taxon>Bacillati</taxon>
        <taxon>Bacillota</taxon>
        <taxon>Bacilli</taxon>
        <taxon>Bacillales</taxon>
        <taxon>Bacillaceae</taxon>
        <taxon>Bacillus</taxon>
        <taxon>Bacillus cereus group</taxon>
    </lineage>
</organism>
<dbReference type="EMBL" id="CP001177">
    <property type="protein sequence ID" value="ACJ81419.1"/>
    <property type="molecule type" value="Genomic_DNA"/>
</dbReference>
<dbReference type="SMR" id="B7HQU3"/>
<dbReference type="KEGG" id="bcr:BCAH187_A0140"/>
<dbReference type="HOGENOM" id="CLU_122625_1_3_9"/>
<dbReference type="Proteomes" id="UP000002214">
    <property type="component" value="Chromosome"/>
</dbReference>
<dbReference type="GO" id="GO:1990904">
    <property type="term" value="C:ribonucleoprotein complex"/>
    <property type="evidence" value="ECO:0007669"/>
    <property type="project" value="UniProtKB-KW"/>
</dbReference>
<dbReference type="GO" id="GO:0005840">
    <property type="term" value="C:ribosome"/>
    <property type="evidence" value="ECO:0007669"/>
    <property type="project" value="UniProtKB-KW"/>
</dbReference>
<dbReference type="GO" id="GO:0003735">
    <property type="term" value="F:structural constituent of ribosome"/>
    <property type="evidence" value="ECO:0007669"/>
    <property type="project" value="InterPro"/>
</dbReference>
<dbReference type="GO" id="GO:0000049">
    <property type="term" value="F:tRNA binding"/>
    <property type="evidence" value="ECO:0007669"/>
    <property type="project" value="UniProtKB-UniRule"/>
</dbReference>
<dbReference type="GO" id="GO:0006412">
    <property type="term" value="P:translation"/>
    <property type="evidence" value="ECO:0007669"/>
    <property type="project" value="UniProtKB-UniRule"/>
</dbReference>
<dbReference type="FunFam" id="3.30.70.600:FF:000001">
    <property type="entry name" value="30S ribosomal protein S10"/>
    <property type="match status" value="1"/>
</dbReference>
<dbReference type="Gene3D" id="3.30.70.600">
    <property type="entry name" value="Ribosomal protein S10 domain"/>
    <property type="match status" value="1"/>
</dbReference>
<dbReference type="HAMAP" id="MF_00508">
    <property type="entry name" value="Ribosomal_uS10"/>
    <property type="match status" value="1"/>
</dbReference>
<dbReference type="InterPro" id="IPR001848">
    <property type="entry name" value="Ribosomal_uS10"/>
</dbReference>
<dbReference type="InterPro" id="IPR018268">
    <property type="entry name" value="Ribosomal_uS10_CS"/>
</dbReference>
<dbReference type="InterPro" id="IPR027486">
    <property type="entry name" value="Ribosomal_uS10_dom"/>
</dbReference>
<dbReference type="InterPro" id="IPR036838">
    <property type="entry name" value="Ribosomal_uS10_dom_sf"/>
</dbReference>
<dbReference type="NCBIfam" id="NF001861">
    <property type="entry name" value="PRK00596.1"/>
    <property type="match status" value="1"/>
</dbReference>
<dbReference type="NCBIfam" id="TIGR01049">
    <property type="entry name" value="rpsJ_bact"/>
    <property type="match status" value="1"/>
</dbReference>
<dbReference type="PANTHER" id="PTHR11700">
    <property type="entry name" value="30S RIBOSOMAL PROTEIN S10 FAMILY MEMBER"/>
    <property type="match status" value="1"/>
</dbReference>
<dbReference type="Pfam" id="PF00338">
    <property type="entry name" value="Ribosomal_S10"/>
    <property type="match status" value="1"/>
</dbReference>
<dbReference type="PRINTS" id="PR00971">
    <property type="entry name" value="RIBOSOMALS10"/>
</dbReference>
<dbReference type="SMART" id="SM01403">
    <property type="entry name" value="Ribosomal_S10"/>
    <property type="match status" value="1"/>
</dbReference>
<dbReference type="SUPFAM" id="SSF54999">
    <property type="entry name" value="Ribosomal protein S10"/>
    <property type="match status" value="1"/>
</dbReference>
<dbReference type="PROSITE" id="PS00361">
    <property type="entry name" value="RIBOSOMAL_S10"/>
    <property type="match status" value="1"/>
</dbReference>
<evidence type="ECO:0000255" key="1">
    <source>
        <dbReference type="HAMAP-Rule" id="MF_00508"/>
    </source>
</evidence>
<evidence type="ECO:0000305" key="2"/>
<accession>B7HQU3</accession>